<name>ATPE_PSEPG</name>
<protein>
    <recommendedName>
        <fullName evidence="1">ATP synthase epsilon chain</fullName>
    </recommendedName>
    <alternativeName>
        <fullName evidence="1">ATP synthase F1 sector epsilon subunit</fullName>
    </alternativeName>
    <alternativeName>
        <fullName evidence="1">F-ATPase epsilon subunit</fullName>
    </alternativeName>
</protein>
<sequence>MAMTVHCDIVSAEGEIFSGLVEMVVAHGNLGDLGIAPGHAPLITNLKPGPITLTKQGGTQEVFYISGGFLEVQPNMVKVLADTVQRAADLDEAQAQEALKAAENALNLKGADFDYGAAAARLAEAAAQLRTVQQMRKGK</sequence>
<feature type="chain" id="PRO_1000081741" description="ATP synthase epsilon chain">
    <location>
        <begin position="1"/>
        <end position="139"/>
    </location>
</feature>
<gene>
    <name evidence="1" type="primary">atpC</name>
    <name type="ordered locus">PputGB1_5430</name>
</gene>
<organism>
    <name type="scientific">Pseudomonas putida (strain GB-1)</name>
    <dbReference type="NCBI Taxonomy" id="76869"/>
    <lineage>
        <taxon>Bacteria</taxon>
        <taxon>Pseudomonadati</taxon>
        <taxon>Pseudomonadota</taxon>
        <taxon>Gammaproteobacteria</taxon>
        <taxon>Pseudomonadales</taxon>
        <taxon>Pseudomonadaceae</taxon>
        <taxon>Pseudomonas</taxon>
    </lineage>
</organism>
<evidence type="ECO:0000255" key="1">
    <source>
        <dbReference type="HAMAP-Rule" id="MF_00530"/>
    </source>
</evidence>
<reference key="1">
    <citation type="submission" date="2008-01" db="EMBL/GenBank/DDBJ databases">
        <title>Complete sequence of Pseudomonas putida GB-1.</title>
        <authorList>
            <consortium name="US DOE Joint Genome Institute"/>
            <person name="Copeland A."/>
            <person name="Lucas S."/>
            <person name="Lapidus A."/>
            <person name="Barry K."/>
            <person name="Glavina del Rio T."/>
            <person name="Dalin E."/>
            <person name="Tice H."/>
            <person name="Pitluck S."/>
            <person name="Bruce D."/>
            <person name="Goodwin L."/>
            <person name="Chertkov O."/>
            <person name="Brettin T."/>
            <person name="Detter J.C."/>
            <person name="Han C."/>
            <person name="Kuske C.R."/>
            <person name="Schmutz J."/>
            <person name="Larimer F."/>
            <person name="Land M."/>
            <person name="Hauser L."/>
            <person name="Kyrpides N."/>
            <person name="Kim E."/>
            <person name="McCarthy J.K."/>
            <person name="Richardson P."/>
        </authorList>
    </citation>
    <scope>NUCLEOTIDE SEQUENCE [LARGE SCALE GENOMIC DNA]</scope>
    <source>
        <strain>GB-1</strain>
    </source>
</reference>
<keyword id="KW-0066">ATP synthesis</keyword>
<keyword id="KW-0997">Cell inner membrane</keyword>
<keyword id="KW-1003">Cell membrane</keyword>
<keyword id="KW-0139">CF(1)</keyword>
<keyword id="KW-0375">Hydrogen ion transport</keyword>
<keyword id="KW-0406">Ion transport</keyword>
<keyword id="KW-0472">Membrane</keyword>
<keyword id="KW-0813">Transport</keyword>
<comment type="function">
    <text evidence="1">Produces ATP from ADP in the presence of a proton gradient across the membrane.</text>
</comment>
<comment type="subunit">
    <text evidence="1">F-type ATPases have 2 components, CF(1) - the catalytic core - and CF(0) - the membrane proton channel. CF(1) has five subunits: alpha(3), beta(3), gamma(1), delta(1), epsilon(1). CF(0) has three main subunits: a, b and c.</text>
</comment>
<comment type="subcellular location">
    <subcellularLocation>
        <location evidence="1">Cell inner membrane</location>
        <topology evidence="1">Peripheral membrane protein</topology>
    </subcellularLocation>
</comment>
<comment type="similarity">
    <text evidence="1">Belongs to the ATPase epsilon chain family.</text>
</comment>
<accession>B0KRA7</accession>
<proteinExistence type="inferred from homology"/>
<dbReference type="EMBL" id="CP000926">
    <property type="protein sequence ID" value="ABZ01312.1"/>
    <property type="molecule type" value="Genomic_DNA"/>
</dbReference>
<dbReference type="RefSeq" id="WP_012274908.1">
    <property type="nucleotide sequence ID" value="NC_010322.1"/>
</dbReference>
<dbReference type="SMR" id="B0KRA7"/>
<dbReference type="KEGG" id="ppg:PputGB1_5430"/>
<dbReference type="eggNOG" id="COG0355">
    <property type="taxonomic scope" value="Bacteria"/>
</dbReference>
<dbReference type="HOGENOM" id="CLU_084338_2_0_6"/>
<dbReference type="Proteomes" id="UP000002157">
    <property type="component" value="Chromosome"/>
</dbReference>
<dbReference type="GO" id="GO:0005886">
    <property type="term" value="C:plasma membrane"/>
    <property type="evidence" value="ECO:0007669"/>
    <property type="project" value="UniProtKB-SubCell"/>
</dbReference>
<dbReference type="GO" id="GO:0045259">
    <property type="term" value="C:proton-transporting ATP synthase complex"/>
    <property type="evidence" value="ECO:0007669"/>
    <property type="project" value="UniProtKB-KW"/>
</dbReference>
<dbReference type="GO" id="GO:0005524">
    <property type="term" value="F:ATP binding"/>
    <property type="evidence" value="ECO:0007669"/>
    <property type="project" value="UniProtKB-UniRule"/>
</dbReference>
<dbReference type="GO" id="GO:0046933">
    <property type="term" value="F:proton-transporting ATP synthase activity, rotational mechanism"/>
    <property type="evidence" value="ECO:0007669"/>
    <property type="project" value="UniProtKB-UniRule"/>
</dbReference>
<dbReference type="CDD" id="cd12152">
    <property type="entry name" value="F1-ATPase_delta"/>
    <property type="match status" value="1"/>
</dbReference>
<dbReference type="FunFam" id="2.60.15.10:FF:000001">
    <property type="entry name" value="ATP synthase epsilon chain"/>
    <property type="match status" value="1"/>
</dbReference>
<dbReference type="Gene3D" id="1.20.5.440">
    <property type="entry name" value="ATP synthase delta/epsilon subunit, C-terminal domain"/>
    <property type="match status" value="1"/>
</dbReference>
<dbReference type="Gene3D" id="2.60.15.10">
    <property type="entry name" value="F0F1 ATP synthase delta/epsilon subunit, N-terminal"/>
    <property type="match status" value="1"/>
</dbReference>
<dbReference type="HAMAP" id="MF_00530">
    <property type="entry name" value="ATP_synth_epsil_bac"/>
    <property type="match status" value="1"/>
</dbReference>
<dbReference type="InterPro" id="IPR036794">
    <property type="entry name" value="ATP_F1_dsu/esu_C_sf"/>
</dbReference>
<dbReference type="InterPro" id="IPR001469">
    <property type="entry name" value="ATP_synth_F1_dsu/esu"/>
</dbReference>
<dbReference type="InterPro" id="IPR020546">
    <property type="entry name" value="ATP_synth_F1_dsu/esu_N"/>
</dbReference>
<dbReference type="InterPro" id="IPR020547">
    <property type="entry name" value="ATP_synth_F1_esu_C"/>
</dbReference>
<dbReference type="InterPro" id="IPR036771">
    <property type="entry name" value="ATPsynth_dsu/esu_N"/>
</dbReference>
<dbReference type="NCBIfam" id="TIGR01216">
    <property type="entry name" value="ATP_synt_epsi"/>
    <property type="match status" value="1"/>
</dbReference>
<dbReference type="NCBIfam" id="NF001847">
    <property type="entry name" value="PRK00571.1-4"/>
    <property type="match status" value="1"/>
</dbReference>
<dbReference type="PANTHER" id="PTHR13822">
    <property type="entry name" value="ATP SYNTHASE DELTA/EPSILON CHAIN"/>
    <property type="match status" value="1"/>
</dbReference>
<dbReference type="PANTHER" id="PTHR13822:SF10">
    <property type="entry name" value="ATP SYNTHASE EPSILON CHAIN, CHLOROPLASTIC"/>
    <property type="match status" value="1"/>
</dbReference>
<dbReference type="Pfam" id="PF00401">
    <property type="entry name" value="ATP-synt_DE"/>
    <property type="match status" value="1"/>
</dbReference>
<dbReference type="Pfam" id="PF02823">
    <property type="entry name" value="ATP-synt_DE_N"/>
    <property type="match status" value="1"/>
</dbReference>
<dbReference type="SUPFAM" id="SSF46604">
    <property type="entry name" value="Epsilon subunit of F1F0-ATP synthase C-terminal domain"/>
    <property type="match status" value="1"/>
</dbReference>
<dbReference type="SUPFAM" id="SSF51344">
    <property type="entry name" value="Epsilon subunit of F1F0-ATP synthase N-terminal domain"/>
    <property type="match status" value="1"/>
</dbReference>